<gene>
    <name evidence="1" type="primary">mscL</name>
    <name type="ordered locus">SNSL254_A3679</name>
</gene>
<comment type="function">
    <text evidence="1">Channel that opens in response to stretch forces in the membrane lipid bilayer. May participate in the regulation of osmotic pressure changes within the cell.</text>
</comment>
<comment type="subunit">
    <text evidence="1">Homopentamer.</text>
</comment>
<comment type="subcellular location">
    <subcellularLocation>
        <location evidence="1">Cell inner membrane</location>
        <topology evidence="1">Multi-pass membrane protein</topology>
    </subcellularLocation>
</comment>
<comment type="similarity">
    <text evidence="1">Belongs to the MscL family.</text>
</comment>
<reference key="1">
    <citation type="journal article" date="2011" name="J. Bacteriol.">
        <title>Comparative genomics of 28 Salmonella enterica isolates: evidence for CRISPR-mediated adaptive sublineage evolution.</title>
        <authorList>
            <person name="Fricke W.F."/>
            <person name="Mammel M.K."/>
            <person name="McDermott P.F."/>
            <person name="Tartera C."/>
            <person name="White D.G."/>
            <person name="Leclerc J.E."/>
            <person name="Ravel J."/>
            <person name="Cebula T.A."/>
        </authorList>
    </citation>
    <scope>NUCLEOTIDE SEQUENCE [LARGE SCALE GENOMIC DNA]</scope>
    <source>
        <strain>SL254</strain>
    </source>
</reference>
<dbReference type="EMBL" id="CP001113">
    <property type="protein sequence ID" value="ACF65287.1"/>
    <property type="molecule type" value="Genomic_DNA"/>
</dbReference>
<dbReference type="RefSeq" id="WP_000008119.1">
    <property type="nucleotide sequence ID" value="NZ_CCMR01000003.1"/>
</dbReference>
<dbReference type="SMR" id="B4SUR2"/>
<dbReference type="KEGG" id="see:SNSL254_A3679"/>
<dbReference type="HOGENOM" id="CLU_095787_0_0_6"/>
<dbReference type="Proteomes" id="UP000008824">
    <property type="component" value="Chromosome"/>
</dbReference>
<dbReference type="GO" id="GO:0005886">
    <property type="term" value="C:plasma membrane"/>
    <property type="evidence" value="ECO:0007669"/>
    <property type="project" value="UniProtKB-SubCell"/>
</dbReference>
<dbReference type="GO" id="GO:0008381">
    <property type="term" value="F:mechanosensitive monoatomic ion channel activity"/>
    <property type="evidence" value="ECO:0007669"/>
    <property type="project" value="UniProtKB-UniRule"/>
</dbReference>
<dbReference type="FunFam" id="1.10.1200.120:FF:000001">
    <property type="entry name" value="Large-conductance mechanosensitive channel"/>
    <property type="match status" value="1"/>
</dbReference>
<dbReference type="Gene3D" id="1.10.1200.120">
    <property type="entry name" value="Large-conductance mechanosensitive channel, MscL, domain 1"/>
    <property type="match status" value="1"/>
</dbReference>
<dbReference type="HAMAP" id="MF_00115">
    <property type="entry name" value="MscL"/>
    <property type="match status" value="1"/>
</dbReference>
<dbReference type="InterPro" id="IPR019823">
    <property type="entry name" value="Mechanosensitive_channel_CS"/>
</dbReference>
<dbReference type="InterPro" id="IPR001185">
    <property type="entry name" value="MS_channel"/>
</dbReference>
<dbReference type="InterPro" id="IPR037673">
    <property type="entry name" value="MSC/AndL"/>
</dbReference>
<dbReference type="InterPro" id="IPR036019">
    <property type="entry name" value="MscL_channel"/>
</dbReference>
<dbReference type="NCBIfam" id="TIGR00220">
    <property type="entry name" value="mscL"/>
    <property type="match status" value="1"/>
</dbReference>
<dbReference type="NCBIfam" id="NF001841">
    <property type="entry name" value="PRK00567.1-1"/>
    <property type="match status" value="1"/>
</dbReference>
<dbReference type="NCBIfam" id="NF001843">
    <property type="entry name" value="PRK00567.1-4"/>
    <property type="match status" value="1"/>
</dbReference>
<dbReference type="PANTHER" id="PTHR30266:SF2">
    <property type="entry name" value="LARGE-CONDUCTANCE MECHANOSENSITIVE CHANNEL"/>
    <property type="match status" value="1"/>
</dbReference>
<dbReference type="PANTHER" id="PTHR30266">
    <property type="entry name" value="MECHANOSENSITIVE CHANNEL MSCL"/>
    <property type="match status" value="1"/>
</dbReference>
<dbReference type="Pfam" id="PF01741">
    <property type="entry name" value="MscL"/>
    <property type="match status" value="1"/>
</dbReference>
<dbReference type="PRINTS" id="PR01264">
    <property type="entry name" value="MECHCHANNEL"/>
</dbReference>
<dbReference type="SUPFAM" id="SSF81330">
    <property type="entry name" value="Gated mechanosensitive channel"/>
    <property type="match status" value="1"/>
</dbReference>
<dbReference type="PROSITE" id="PS01327">
    <property type="entry name" value="MSCL"/>
    <property type="match status" value="1"/>
</dbReference>
<keyword id="KW-0997">Cell inner membrane</keyword>
<keyword id="KW-1003">Cell membrane</keyword>
<keyword id="KW-0407">Ion channel</keyword>
<keyword id="KW-0406">Ion transport</keyword>
<keyword id="KW-0472">Membrane</keyword>
<keyword id="KW-0812">Transmembrane</keyword>
<keyword id="KW-1133">Transmembrane helix</keyword>
<keyword id="KW-0813">Transport</keyword>
<proteinExistence type="inferred from homology"/>
<feature type="chain" id="PRO_1000094924" description="Large-conductance mechanosensitive channel">
    <location>
        <begin position="1"/>
        <end position="137"/>
    </location>
</feature>
<feature type="transmembrane region" description="Helical" evidence="1">
    <location>
        <begin position="10"/>
        <end position="30"/>
    </location>
</feature>
<feature type="transmembrane region" description="Helical" evidence="1">
    <location>
        <begin position="76"/>
        <end position="96"/>
    </location>
</feature>
<name>MSCL_SALNS</name>
<sequence>MSFIKEFREFAMRGNVVDLAVGVIIGAAFGKIVSSLVADIIMPPLGLLIGGIDFKQFAFTLREAQGDIPAVVMHYGVFIQNVFDFVIVAFAIFVAIKLINRLNRKKAEEPAAPPAPSKEEVLLGEIRDLLKEQNNRS</sequence>
<accession>B4SUR2</accession>
<evidence type="ECO:0000255" key="1">
    <source>
        <dbReference type="HAMAP-Rule" id="MF_00115"/>
    </source>
</evidence>
<organism>
    <name type="scientific">Salmonella newport (strain SL254)</name>
    <dbReference type="NCBI Taxonomy" id="423368"/>
    <lineage>
        <taxon>Bacteria</taxon>
        <taxon>Pseudomonadati</taxon>
        <taxon>Pseudomonadota</taxon>
        <taxon>Gammaproteobacteria</taxon>
        <taxon>Enterobacterales</taxon>
        <taxon>Enterobacteriaceae</taxon>
        <taxon>Salmonella</taxon>
    </lineage>
</organism>
<protein>
    <recommendedName>
        <fullName evidence="1">Large-conductance mechanosensitive channel</fullName>
    </recommendedName>
</protein>